<keyword id="KW-0030">Aminoacyl-tRNA synthetase</keyword>
<keyword id="KW-0067">ATP-binding</keyword>
<keyword id="KW-0963">Cytoplasm</keyword>
<keyword id="KW-0436">Ligase</keyword>
<keyword id="KW-0547">Nucleotide-binding</keyword>
<keyword id="KW-0648">Protein biosynthesis</keyword>
<evidence type="ECO:0000255" key="1">
    <source>
        <dbReference type="HAMAP-Rule" id="MF_00049"/>
    </source>
</evidence>
<organism>
    <name type="scientific">Escherichia coli O7:K1 (strain IAI39 / ExPEC)</name>
    <dbReference type="NCBI Taxonomy" id="585057"/>
    <lineage>
        <taxon>Bacteria</taxon>
        <taxon>Pseudomonadati</taxon>
        <taxon>Pseudomonadota</taxon>
        <taxon>Gammaproteobacteria</taxon>
        <taxon>Enterobacterales</taxon>
        <taxon>Enterobacteriaceae</taxon>
        <taxon>Escherichia</taxon>
    </lineage>
</organism>
<name>SYL_ECO7I</name>
<accession>B7NM01</accession>
<dbReference type="EC" id="6.1.1.4" evidence="1"/>
<dbReference type="EMBL" id="CU928164">
    <property type="protein sequence ID" value="CAR16754.1"/>
    <property type="molecule type" value="Genomic_DNA"/>
</dbReference>
<dbReference type="RefSeq" id="WP_012602225.1">
    <property type="nucleotide sequence ID" value="NC_011750.1"/>
</dbReference>
<dbReference type="RefSeq" id="YP_002406643.1">
    <property type="nucleotide sequence ID" value="NC_011750.1"/>
</dbReference>
<dbReference type="SMR" id="B7NM01"/>
<dbReference type="STRING" id="585057.ECIAI39_0617"/>
<dbReference type="KEGG" id="ect:ECIAI39_0617"/>
<dbReference type="PATRIC" id="fig|585057.6.peg.656"/>
<dbReference type="HOGENOM" id="CLU_004427_0_0_6"/>
<dbReference type="Proteomes" id="UP000000749">
    <property type="component" value="Chromosome"/>
</dbReference>
<dbReference type="GO" id="GO:0005829">
    <property type="term" value="C:cytosol"/>
    <property type="evidence" value="ECO:0007669"/>
    <property type="project" value="TreeGrafter"/>
</dbReference>
<dbReference type="GO" id="GO:0002161">
    <property type="term" value="F:aminoacyl-tRNA deacylase activity"/>
    <property type="evidence" value="ECO:0007669"/>
    <property type="project" value="InterPro"/>
</dbReference>
<dbReference type="GO" id="GO:0005524">
    <property type="term" value="F:ATP binding"/>
    <property type="evidence" value="ECO:0007669"/>
    <property type="project" value="UniProtKB-UniRule"/>
</dbReference>
<dbReference type="GO" id="GO:0004823">
    <property type="term" value="F:leucine-tRNA ligase activity"/>
    <property type="evidence" value="ECO:0007669"/>
    <property type="project" value="UniProtKB-UniRule"/>
</dbReference>
<dbReference type="GO" id="GO:0006429">
    <property type="term" value="P:leucyl-tRNA aminoacylation"/>
    <property type="evidence" value="ECO:0007669"/>
    <property type="project" value="UniProtKB-UniRule"/>
</dbReference>
<dbReference type="CDD" id="cd07958">
    <property type="entry name" value="Anticodon_Ia_Leu_BEm"/>
    <property type="match status" value="1"/>
</dbReference>
<dbReference type="CDD" id="cd00812">
    <property type="entry name" value="LeuRS_core"/>
    <property type="match status" value="1"/>
</dbReference>
<dbReference type="FunFam" id="1.10.730.10:FF:000002">
    <property type="entry name" value="Leucine--tRNA ligase"/>
    <property type="match status" value="2"/>
</dbReference>
<dbReference type="FunFam" id="2.20.28.290:FF:000001">
    <property type="entry name" value="Leucine--tRNA ligase"/>
    <property type="match status" value="1"/>
</dbReference>
<dbReference type="FunFam" id="3.10.20.590:FF:000001">
    <property type="entry name" value="Leucine--tRNA ligase"/>
    <property type="match status" value="1"/>
</dbReference>
<dbReference type="FunFam" id="3.40.50.620:FF:000003">
    <property type="entry name" value="Leucine--tRNA ligase"/>
    <property type="match status" value="1"/>
</dbReference>
<dbReference type="FunFam" id="3.40.50.620:FF:000124">
    <property type="entry name" value="Leucine--tRNA ligase"/>
    <property type="match status" value="1"/>
</dbReference>
<dbReference type="FunFam" id="3.90.740.10:FF:000012">
    <property type="entry name" value="Leucine--tRNA ligase"/>
    <property type="match status" value="1"/>
</dbReference>
<dbReference type="Gene3D" id="2.20.28.290">
    <property type="match status" value="1"/>
</dbReference>
<dbReference type="Gene3D" id="3.10.20.590">
    <property type="match status" value="1"/>
</dbReference>
<dbReference type="Gene3D" id="3.40.50.620">
    <property type="entry name" value="HUPs"/>
    <property type="match status" value="2"/>
</dbReference>
<dbReference type="Gene3D" id="1.10.730.10">
    <property type="entry name" value="Isoleucyl-tRNA Synthetase, Domain 1"/>
    <property type="match status" value="1"/>
</dbReference>
<dbReference type="HAMAP" id="MF_00049_B">
    <property type="entry name" value="Leu_tRNA_synth_B"/>
    <property type="match status" value="1"/>
</dbReference>
<dbReference type="InterPro" id="IPR001412">
    <property type="entry name" value="aa-tRNA-synth_I_CS"/>
</dbReference>
<dbReference type="InterPro" id="IPR002300">
    <property type="entry name" value="aa-tRNA-synth_Ia"/>
</dbReference>
<dbReference type="InterPro" id="IPR002302">
    <property type="entry name" value="Leu-tRNA-ligase"/>
</dbReference>
<dbReference type="InterPro" id="IPR025709">
    <property type="entry name" value="Leu_tRNA-synth_edit"/>
</dbReference>
<dbReference type="InterPro" id="IPR013155">
    <property type="entry name" value="M/V/L/I-tRNA-synth_anticd-bd"/>
</dbReference>
<dbReference type="InterPro" id="IPR015413">
    <property type="entry name" value="Methionyl/Leucyl_tRNA_Synth"/>
</dbReference>
<dbReference type="InterPro" id="IPR014729">
    <property type="entry name" value="Rossmann-like_a/b/a_fold"/>
</dbReference>
<dbReference type="InterPro" id="IPR009080">
    <property type="entry name" value="tRNAsynth_Ia_anticodon-bd"/>
</dbReference>
<dbReference type="InterPro" id="IPR009008">
    <property type="entry name" value="Val/Leu/Ile-tRNA-synth_edit"/>
</dbReference>
<dbReference type="NCBIfam" id="TIGR00396">
    <property type="entry name" value="leuS_bact"/>
    <property type="match status" value="1"/>
</dbReference>
<dbReference type="PANTHER" id="PTHR43740:SF2">
    <property type="entry name" value="LEUCINE--TRNA LIGASE, MITOCHONDRIAL"/>
    <property type="match status" value="1"/>
</dbReference>
<dbReference type="PANTHER" id="PTHR43740">
    <property type="entry name" value="LEUCYL-TRNA SYNTHETASE"/>
    <property type="match status" value="1"/>
</dbReference>
<dbReference type="Pfam" id="PF08264">
    <property type="entry name" value="Anticodon_1"/>
    <property type="match status" value="1"/>
</dbReference>
<dbReference type="Pfam" id="PF00133">
    <property type="entry name" value="tRNA-synt_1"/>
    <property type="match status" value="2"/>
</dbReference>
<dbReference type="Pfam" id="PF13603">
    <property type="entry name" value="tRNA-synt_1_2"/>
    <property type="match status" value="1"/>
</dbReference>
<dbReference type="Pfam" id="PF09334">
    <property type="entry name" value="tRNA-synt_1g"/>
    <property type="match status" value="1"/>
</dbReference>
<dbReference type="PRINTS" id="PR00985">
    <property type="entry name" value="TRNASYNTHLEU"/>
</dbReference>
<dbReference type="SUPFAM" id="SSF47323">
    <property type="entry name" value="Anticodon-binding domain of a subclass of class I aminoacyl-tRNA synthetases"/>
    <property type="match status" value="1"/>
</dbReference>
<dbReference type="SUPFAM" id="SSF52374">
    <property type="entry name" value="Nucleotidylyl transferase"/>
    <property type="match status" value="1"/>
</dbReference>
<dbReference type="SUPFAM" id="SSF50677">
    <property type="entry name" value="ValRS/IleRS/LeuRS editing domain"/>
    <property type="match status" value="1"/>
</dbReference>
<dbReference type="PROSITE" id="PS00178">
    <property type="entry name" value="AA_TRNA_LIGASE_I"/>
    <property type="match status" value="1"/>
</dbReference>
<protein>
    <recommendedName>
        <fullName evidence="1">Leucine--tRNA ligase</fullName>
        <ecNumber evidence="1">6.1.1.4</ecNumber>
    </recommendedName>
    <alternativeName>
        <fullName evidence="1">Leucyl-tRNA synthetase</fullName>
        <shortName evidence="1">LeuRS</shortName>
    </alternativeName>
</protein>
<reference key="1">
    <citation type="journal article" date="2009" name="PLoS Genet.">
        <title>Organised genome dynamics in the Escherichia coli species results in highly diverse adaptive paths.</title>
        <authorList>
            <person name="Touchon M."/>
            <person name="Hoede C."/>
            <person name="Tenaillon O."/>
            <person name="Barbe V."/>
            <person name="Baeriswyl S."/>
            <person name="Bidet P."/>
            <person name="Bingen E."/>
            <person name="Bonacorsi S."/>
            <person name="Bouchier C."/>
            <person name="Bouvet O."/>
            <person name="Calteau A."/>
            <person name="Chiapello H."/>
            <person name="Clermont O."/>
            <person name="Cruveiller S."/>
            <person name="Danchin A."/>
            <person name="Diard M."/>
            <person name="Dossat C."/>
            <person name="Karoui M.E."/>
            <person name="Frapy E."/>
            <person name="Garry L."/>
            <person name="Ghigo J.M."/>
            <person name="Gilles A.M."/>
            <person name="Johnson J."/>
            <person name="Le Bouguenec C."/>
            <person name="Lescat M."/>
            <person name="Mangenot S."/>
            <person name="Martinez-Jehanne V."/>
            <person name="Matic I."/>
            <person name="Nassif X."/>
            <person name="Oztas S."/>
            <person name="Petit M.A."/>
            <person name="Pichon C."/>
            <person name="Rouy Z."/>
            <person name="Ruf C.S."/>
            <person name="Schneider D."/>
            <person name="Tourret J."/>
            <person name="Vacherie B."/>
            <person name="Vallenet D."/>
            <person name="Medigue C."/>
            <person name="Rocha E.P.C."/>
            <person name="Denamur E."/>
        </authorList>
    </citation>
    <scope>NUCLEOTIDE SEQUENCE [LARGE SCALE GENOMIC DNA]</scope>
    <source>
        <strain>IAI39 / ExPEC</strain>
    </source>
</reference>
<feature type="chain" id="PRO_1000199204" description="Leucine--tRNA ligase">
    <location>
        <begin position="1"/>
        <end position="860"/>
    </location>
</feature>
<feature type="short sequence motif" description="'HIGH' region">
    <location>
        <begin position="42"/>
        <end position="52"/>
    </location>
</feature>
<feature type="short sequence motif" description="'KMSKS' region">
    <location>
        <begin position="619"/>
        <end position="623"/>
    </location>
</feature>
<feature type="binding site" evidence="1">
    <location>
        <position position="622"/>
    </location>
    <ligand>
        <name>ATP</name>
        <dbReference type="ChEBI" id="CHEBI:30616"/>
    </ligand>
</feature>
<sequence length="860" mass="97248">MQEQYRPEEIESKVQLHWDEKRTFEVTEDESKEKYYCLSMLPYPSGRLHMGHVRNYTIGDVIARYQRMLGKNVLQPIGWDAFGLPAEGAAVKNNTAPAPWTYDNIAYMKNQLKMLGFGYDWSRELATCTPEYYRWEQKFFTELYKKGLVYKKTSAVNWCPNDQTVLANEQVIDGCCWRCDTKVERKEIPQWFIKITAYADELLNNLDKLDHWPDTVKTMQRNWIGRSEGVEITFNVNDYDNTLTVYTTRPDTFMGCTYLAVAAGHPLAQKAAENNPELAAFIDECRNTKVAEAEMATMEKKGVDTGFKAVHPLTGEEIPVWAANFVLMEYGTGAVMAVPGHDQRDYEFASKYGLNIKPVILAADGSEPDLSQQALTEKGVLFNSGEFNGLDHEAAFNAIADKLTAMGVGERKVNYRLRDWGVSRQRYWGAPIPMVTLEDGTVMPTPDDQLPVILPEDVVMDGITSPIKADPEWAKTTVNGMPALRETDTFDTFMESSWYYARYTCPEYKEGMLDSKAANYWLPVDIYIGGIEHAIMHLLYFRFFHKLMRDAGMVNSDEPAKQLLCQGMVLADAFYYVGENGERNWVSPVDAIVERDEKGRIVKAKDAAGHELVYTGMSKMSKSKNNGIDPQVMVERYGADTVRLFMMFASPADMTLEWQESGVEGANRFLKRVWKLVYEHTAKGDVAALNVDALTEDQKALRRDVHKTIAKVTDDIGRRQTFNTAIAAIMELMNKLAKAPTDGEQDRALMQEALLAVIRMLNPFTPHICFTLWQELKGEGDIDNAPWPVADEKAMVEDSTLVVVQVNGKVRAKITVPVDATEEQVRERAGQEHLVAKYLDGVTVRKVIYVPGKLLNLVVG</sequence>
<comment type="catalytic activity">
    <reaction evidence="1">
        <text>tRNA(Leu) + L-leucine + ATP = L-leucyl-tRNA(Leu) + AMP + diphosphate</text>
        <dbReference type="Rhea" id="RHEA:11688"/>
        <dbReference type="Rhea" id="RHEA-COMP:9613"/>
        <dbReference type="Rhea" id="RHEA-COMP:9622"/>
        <dbReference type="ChEBI" id="CHEBI:30616"/>
        <dbReference type="ChEBI" id="CHEBI:33019"/>
        <dbReference type="ChEBI" id="CHEBI:57427"/>
        <dbReference type="ChEBI" id="CHEBI:78442"/>
        <dbReference type="ChEBI" id="CHEBI:78494"/>
        <dbReference type="ChEBI" id="CHEBI:456215"/>
        <dbReference type="EC" id="6.1.1.4"/>
    </reaction>
</comment>
<comment type="subcellular location">
    <subcellularLocation>
        <location evidence="1">Cytoplasm</location>
    </subcellularLocation>
</comment>
<comment type="similarity">
    <text evidence="1">Belongs to the class-I aminoacyl-tRNA synthetase family.</text>
</comment>
<proteinExistence type="inferred from homology"/>
<gene>
    <name evidence="1" type="primary">leuS</name>
    <name type="ordered locus">ECIAI39_0617</name>
</gene>